<gene>
    <name evidence="1" type="primary">surE</name>
    <name type="ordered locus">Fjoh_1429</name>
</gene>
<evidence type="ECO:0000255" key="1">
    <source>
        <dbReference type="HAMAP-Rule" id="MF_00060"/>
    </source>
</evidence>
<proteinExistence type="inferred from homology"/>
<accession>A5FK02</accession>
<feature type="chain" id="PRO_1000075028" description="5'-nucleotidase SurE">
    <location>
        <begin position="1"/>
        <end position="259"/>
    </location>
</feature>
<feature type="binding site" evidence="1">
    <location>
        <position position="13"/>
    </location>
    <ligand>
        <name>a divalent metal cation</name>
        <dbReference type="ChEBI" id="CHEBI:60240"/>
    </ligand>
</feature>
<feature type="binding site" evidence="1">
    <location>
        <position position="14"/>
    </location>
    <ligand>
        <name>a divalent metal cation</name>
        <dbReference type="ChEBI" id="CHEBI:60240"/>
    </ligand>
</feature>
<feature type="binding site" evidence="1">
    <location>
        <position position="44"/>
    </location>
    <ligand>
        <name>a divalent metal cation</name>
        <dbReference type="ChEBI" id="CHEBI:60240"/>
    </ligand>
</feature>
<feature type="binding site" evidence="1">
    <location>
        <position position="101"/>
    </location>
    <ligand>
        <name>a divalent metal cation</name>
        <dbReference type="ChEBI" id="CHEBI:60240"/>
    </ligand>
</feature>
<name>SURE_FLAJ1</name>
<dbReference type="EC" id="3.1.3.5" evidence="1"/>
<dbReference type="EMBL" id="CP000685">
    <property type="protein sequence ID" value="ABQ04461.1"/>
    <property type="molecule type" value="Genomic_DNA"/>
</dbReference>
<dbReference type="RefSeq" id="WP_012023509.1">
    <property type="nucleotide sequence ID" value="NC_009441.1"/>
</dbReference>
<dbReference type="SMR" id="A5FK02"/>
<dbReference type="STRING" id="376686.Fjoh_1429"/>
<dbReference type="KEGG" id="fjo:Fjoh_1429"/>
<dbReference type="eggNOG" id="COG0496">
    <property type="taxonomic scope" value="Bacteria"/>
</dbReference>
<dbReference type="HOGENOM" id="CLU_045192_1_0_10"/>
<dbReference type="OrthoDB" id="9780815at2"/>
<dbReference type="Proteomes" id="UP000006694">
    <property type="component" value="Chromosome"/>
</dbReference>
<dbReference type="GO" id="GO:0005737">
    <property type="term" value="C:cytoplasm"/>
    <property type="evidence" value="ECO:0007669"/>
    <property type="project" value="UniProtKB-SubCell"/>
</dbReference>
<dbReference type="GO" id="GO:0008253">
    <property type="term" value="F:5'-nucleotidase activity"/>
    <property type="evidence" value="ECO:0007669"/>
    <property type="project" value="UniProtKB-UniRule"/>
</dbReference>
<dbReference type="GO" id="GO:0046872">
    <property type="term" value="F:metal ion binding"/>
    <property type="evidence" value="ECO:0007669"/>
    <property type="project" value="UniProtKB-UniRule"/>
</dbReference>
<dbReference type="GO" id="GO:0000166">
    <property type="term" value="F:nucleotide binding"/>
    <property type="evidence" value="ECO:0007669"/>
    <property type="project" value="UniProtKB-KW"/>
</dbReference>
<dbReference type="FunFam" id="3.40.1210.10:FF:000001">
    <property type="entry name" value="5'/3'-nucleotidase SurE"/>
    <property type="match status" value="1"/>
</dbReference>
<dbReference type="Gene3D" id="3.40.1210.10">
    <property type="entry name" value="Survival protein SurE-like phosphatase/nucleotidase"/>
    <property type="match status" value="1"/>
</dbReference>
<dbReference type="HAMAP" id="MF_00060">
    <property type="entry name" value="SurE"/>
    <property type="match status" value="1"/>
</dbReference>
<dbReference type="InterPro" id="IPR030048">
    <property type="entry name" value="SurE"/>
</dbReference>
<dbReference type="InterPro" id="IPR002828">
    <property type="entry name" value="SurE-like_Pase/nucleotidase"/>
</dbReference>
<dbReference type="InterPro" id="IPR036523">
    <property type="entry name" value="SurE-like_sf"/>
</dbReference>
<dbReference type="NCBIfam" id="NF001490">
    <property type="entry name" value="PRK00346.1-4"/>
    <property type="match status" value="1"/>
</dbReference>
<dbReference type="NCBIfam" id="NF001492">
    <property type="entry name" value="PRK00346.2-2"/>
    <property type="match status" value="1"/>
</dbReference>
<dbReference type="NCBIfam" id="TIGR00087">
    <property type="entry name" value="surE"/>
    <property type="match status" value="1"/>
</dbReference>
<dbReference type="PANTHER" id="PTHR30457">
    <property type="entry name" value="5'-NUCLEOTIDASE SURE"/>
    <property type="match status" value="1"/>
</dbReference>
<dbReference type="PANTHER" id="PTHR30457:SF0">
    <property type="entry name" value="PHOSPHATASE, PUTATIVE (AFU_ORTHOLOGUE AFUA_4G01070)-RELATED"/>
    <property type="match status" value="1"/>
</dbReference>
<dbReference type="Pfam" id="PF01975">
    <property type="entry name" value="SurE"/>
    <property type="match status" value="1"/>
</dbReference>
<dbReference type="SUPFAM" id="SSF64167">
    <property type="entry name" value="SurE-like"/>
    <property type="match status" value="1"/>
</dbReference>
<protein>
    <recommendedName>
        <fullName evidence="1">5'-nucleotidase SurE</fullName>
        <ecNumber evidence="1">3.1.3.5</ecNumber>
    </recommendedName>
    <alternativeName>
        <fullName evidence="1">Nucleoside 5'-monophosphate phosphohydrolase</fullName>
    </alternativeName>
</protein>
<keyword id="KW-0963">Cytoplasm</keyword>
<keyword id="KW-0378">Hydrolase</keyword>
<keyword id="KW-0479">Metal-binding</keyword>
<keyword id="KW-0547">Nucleotide-binding</keyword>
<comment type="function">
    <text evidence="1">Nucleotidase that shows phosphatase activity on nucleoside 5'-monophosphates.</text>
</comment>
<comment type="catalytic activity">
    <reaction evidence="1">
        <text>a ribonucleoside 5'-phosphate + H2O = a ribonucleoside + phosphate</text>
        <dbReference type="Rhea" id="RHEA:12484"/>
        <dbReference type="ChEBI" id="CHEBI:15377"/>
        <dbReference type="ChEBI" id="CHEBI:18254"/>
        <dbReference type="ChEBI" id="CHEBI:43474"/>
        <dbReference type="ChEBI" id="CHEBI:58043"/>
        <dbReference type="EC" id="3.1.3.5"/>
    </reaction>
</comment>
<comment type="cofactor">
    <cofactor evidence="1">
        <name>a divalent metal cation</name>
        <dbReference type="ChEBI" id="CHEBI:60240"/>
    </cofactor>
    <text evidence="1">Binds 1 divalent metal cation per subunit.</text>
</comment>
<comment type="subcellular location">
    <subcellularLocation>
        <location evidence="1">Cytoplasm</location>
    </subcellularLocation>
</comment>
<comment type="similarity">
    <text evidence="1">Belongs to the SurE nucleotidase family.</text>
</comment>
<sequence length="259" mass="28559">MKDEKPLILVTNDDGILAPGIRALISVMETIGDVVVVAPDKPQSAMGHAITINNTLFLDKISKDDDTITEYSCSGTPVDCVKLAVNEILKRKPDLCVSGINHGSNSSINVIYSGTMSAAVEAGIEGIQAIGFSLLDFDWNADFEPAKAFVKKITLETLKNKLPPGVVLNVNFPKLSEKEIKGIKVCRQAKAYYAQKFDKRQTPFGKDYYWLTGKFTNEDNGEDTDEWALENGYISVVPVQFDLTAHHTMQQLNTWKLNG</sequence>
<organism>
    <name type="scientific">Flavobacterium johnsoniae (strain ATCC 17061 / DSM 2064 / JCM 8514 / BCRC 14874 / CCUG 350202 / NBRC 14942 / NCIMB 11054 / UW101)</name>
    <name type="common">Cytophaga johnsonae</name>
    <dbReference type="NCBI Taxonomy" id="376686"/>
    <lineage>
        <taxon>Bacteria</taxon>
        <taxon>Pseudomonadati</taxon>
        <taxon>Bacteroidota</taxon>
        <taxon>Flavobacteriia</taxon>
        <taxon>Flavobacteriales</taxon>
        <taxon>Flavobacteriaceae</taxon>
        <taxon>Flavobacterium</taxon>
    </lineage>
</organism>
<reference key="1">
    <citation type="journal article" date="2009" name="Appl. Environ. Microbiol.">
        <title>Novel features of the polysaccharide-digesting gliding bacterium Flavobacterium johnsoniae as revealed by genome sequence analysis.</title>
        <authorList>
            <person name="McBride M.J."/>
            <person name="Xie G."/>
            <person name="Martens E.C."/>
            <person name="Lapidus A."/>
            <person name="Henrissat B."/>
            <person name="Rhodes R.G."/>
            <person name="Goltsman E."/>
            <person name="Wang W."/>
            <person name="Xu J."/>
            <person name="Hunnicutt D.W."/>
            <person name="Staroscik A.M."/>
            <person name="Hoover T.R."/>
            <person name="Cheng Y.Q."/>
            <person name="Stein J.L."/>
        </authorList>
    </citation>
    <scope>NUCLEOTIDE SEQUENCE [LARGE SCALE GENOMIC DNA]</scope>
    <source>
        <strain>ATCC 17061 / DSM 2064 / JCM 8514 / BCRC 14874 / CCUG 350202 / NBRC 14942 / NCIMB 11054 / UW101</strain>
    </source>
</reference>